<comment type="function">
    <text evidence="1">An essential GTPase which binds GTP, GDP and possibly (p)ppGpp with moderate affinity, with high nucleotide exchange rates and a fairly low GTP hydrolysis rate. Plays a role in control of the cell cycle, stress response, ribosome biogenesis and in those bacteria that undergo differentiation, in morphogenesis control.</text>
</comment>
<comment type="cofactor">
    <cofactor evidence="1">
        <name>Mg(2+)</name>
        <dbReference type="ChEBI" id="CHEBI:18420"/>
    </cofactor>
</comment>
<comment type="subunit">
    <text evidence="1">Monomer.</text>
</comment>
<comment type="subcellular location">
    <subcellularLocation>
        <location evidence="1">Cytoplasm</location>
    </subcellularLocation>
</comment>
<comment type="similarity">
    <text evidence="1">Belongs to the TRAFAC class OBG-HflX-like GTPase superfamily. OBG GTPase family.</text>
</comment>
<reference key="1">
    <citation type="journal article" date="2000" name="DNA Res.">
        <title>Complete genome structure of the nitrogen-fixing symbiotic bacterium Mesorhizobium loti.</title>
        <authorList>
            <person name="Kaneko T."/>
            <person name="Nakamura Y."/>
            <person name="Sato S."/>
            <person name="Asamizu E."/>
            <person name="Kato T."/>
            <person name="Sasamoto S."/>
            <person name="Watanabe A."/>
            <person name="Idesawa K."/>
            <person name="Ishikawa A."/>
            <person name="Kawashima K."/>
            <person name="Kimura T."/>
            <person name="Kishida Y."/>
            <person name="Kiyokawa C."/>
            <person name="Kohara M."/>
            <person name="Matsumoto M."/>
            <person name="Matsuno A."/>
            <person name="Mochizuki Y."/>
            <person name="Nakayama S."/>
            <person name="Nakazaki N."/>
            <person name="Shimpo S."/>
            <person name="Sugimoto M."/>
            <person name="Takeuchi C."/>
            <person name="Yamada M."/>
            <person name="Tabata S."/>
        </authorList>
    </citation>
    <scope>NUCLEOTIDE SEQUENCE [LARGE SCALE GENOMIC DNA]</scope>
    <source>
        <strain>LMG 29417 / CECT 9101 / MAFF 303099</strain>
    </source>
</reference>
<keyword id="KW-0963">Cytoplasm</keyword>
<keyword id="KW-0342">GTP-binding</keyword>
<keyword id="KW-0378">Hydrolase</keyword>
<keyword id="KW-0460">Magnesium</keyword>
<keyword id="KW-0479">Metal-binding</keyword>
<keyword id="KW-0547">Nucleotide-binding</keyword>
<organism>
    <name type="scientific">Mesorhizobium japonicum (strain LMG 29417 / CECT 9101 / MAFF 303099)</name>
    <name type="common">Mesorhizobium loti (strain MAFF 303099)</name>
    <dbReference type="NCBI Taxonomy" id="266835"/>
    <lineage>
        <taxon>Bacteria</taxon>
        <taxon>Pseudomonadati</taxon>
        <taxon>Pseudomonadota</taxon>
        <taxon>Alphaproteobacteria</taxon>
        <taxon>Hyphomicrobiales</taxon>
        <taxon>Phyllobacteriaceae</taxon>
        <taxon>Mesorhizobium</taxon>
    </lineage>
</organism>
<sequence>MKFLDQAKVYVRSGDGGAGSVSFRREKFIEFGGPDGGDGGRGGDVWLEAVDGLNTLIDYRYQQHFKAKTGVHGMGRNMTGAKGADVTLKVPAGTQVFEEDNETLICDLTVVGQRFLLAKGGNGGFGNQHFKTSTNQAPRRANPGLPGEELNIWLRLKLIADAGLVGLPNAGKSTFLAAVTAAKPKIADYPFTTLHPGLGVARIDAREFVIADIPGLIEGAHEGVGIGDRFLGHVERTRVLLHLVSAQEENPGKAYKTVRAELDAYGNGLIEKVEILALSQVDTLDADARRKKVASLKRAAGRAPMLLSAVTGEGVEAVLRALMTVIAEARAEAAPVVETRWEK</sequence>
<accession>Q98EZ3</accession>
<name>OBG_RHILO</name>
<proteinExistence type="inferred from homology"/>
<gene>
    <name evidence="1" type="primary">obg</name>
    <name type="ordered locus">mll4013</name>
</gene>
<dbReference type="EC" id="3.6.5.-" evidence="1"/>
<dbReference type="EMBL" id="BA000012">
    <property type="protein sequence ID" value="BAB50774.1"/>
    <property type="molecule type" value="Genomic_DNA"/>
</dbReference>
<dbReference type="SMR" id="Q98EZ3"/>
<dbReference type="KEGG" id="mlo:mll4013"/>
<dbReference type="eggNOG" id="COG0536">
    <property type="taxonomic scope" value="Bacteria"/>
</dbReference>
<dbReference type="HOGENOM" id="CLU_011747_2_0_5"/>
<dbReference type="Proteomes" id="UP000000552">
    <property type="component" value="Chromosome"/>
</dbReference>
<dbReference type="GO" id="GO:0005737">
    <property type="term" value="C:cytoplasm"/>
    <property type="evidence" value="ECO:0007669"/>
    <property type="project" value="UniProtKB-SubCell"/>
</dbReference>
<dbReference type="GO" id="GO:0005525">
    <property type="term" value="F:GTP binding"/>
    <property type="evidence" value="ECO:0007669"/>
    <property type="project" value="UniProtKB-UniRule"/>
</dbReference>
<dbReference type="GO" id="GO:0003924">
    <property type="term" value="F:GTPase activity"/>
    <property type="evidence" value="ECO:0007669"/>
    <property type="project" value="UniProtKB-UniRule"/>
</dbReference>
<dbReference type="GO" id="GO:0000287">
    <property type="term" value="F:magnesium ion binding"/>
    <property type="evidence" value="ECO:0007669"/>
    <property type="project" value="InterPro"/>
</dbReference>
<dbReference type="GO" id="GO:0042254">
    <property type="term" value="P:ribosome biogenesis"/>
    <property type="evidence" value="ECO:0007669"/>
    <property type="project" value="UniProtKB-UniRule"/>
</dbReference>
<dbReference type="CDD" id="cd01898">
    <property type="entry name" value="Obg"/>
    <property type="match status" value="1"/>
</dbReference>
<dbReference type="FunFam" id="2.70.210.12:FF:000001">
    <property type="entry name" value="GTPase Obg"/>
    <property type="match status" value="1"/>
</dbReference>
<dbReference type="Gene3D" id="2.70.210.12">
    <property type="entry name" value="GTP1/OBG domain"/>
    <property type="match status" value="1"/>
</dbReference>
<dbReference type="Gene3D" id="3.40.50.300">
    <property type="entry name" value="P-loop containing nucleotide triphosphate hydrolases"/>
    <property type="match status" value="1"/>
</dbReference>
<dbReference type="HAMAP" id="MF_01454">
    <property type="entry name" value="GTPase_Obg"/>
    <property type="match status" value="1"/>
</dbReference>
<dbReference type="InterPro" id="IPR031167">
    <property type="entry name" value="G_OBG"/>
</dbReference>
<dbReference type="InterPro" id="IPR006073">
    <property type="entry name" value="GTP-bd"/>
</dbReference>
<dbReference type="InterPro" id="IPR014100">
    <property type="entry name" value="GTP-bd_Obg/CgtA"/>
</dbReference>
<dbReference type="InterPro" id="IPR006074">
    <property type="entry name" value="GTP1-OBG_CS"/>
</dbReference>
<dbReference type="InterPro" id="IPR006169">
    <property type="entry name" value="GTP1_OBG_dom"/>
</dbReference>
<dbReference type="InterPro" id="IPR036726">
    <property type="entry name" value="GTP1_OBG_dom_sf"/>
</dbReference>
<dbReference type="InterPro" id="IPR045086">
    <property type="entry name" value="OBG_GTPase"/>
</dbReference>
<dbReference type="InterPro" id="IPR027417">
    <property type="entry name" value="P-loop_NTPase"/>
</dbReference>
<dbReference type="NCBIfam" id="TIGR02729">
    <property type="entry name" value="Obg_CgtA"/>
    <property type="match status" value="1"/>
</dbReference>
<dbReference type="NCBIfam" id="NF008955">
    <property type="entry name" value="PRK12297.1"/>
    <property type="match status" value="1"/>
</dbReference>
<dbReference type="NCBIfam" id="NF008956">
    <property type="entry name" value="PRK12299.1"/>
    <property type="match status" value="1"/>
</dbReference>
<dbReference type="PANTHER" id="PTHR11702">
    <property type="entry name" value="DEVELOPMENTALLY REGULATED GTP-BINDING PROTEIN-RELATED"/>
    <property type="match status" value="1"/>
</dbReference>
<dbReference type="PANTHER" id="PTHR11702:SF31">
    <property type="entry name" value="MITOCHONDRIAL RIBOSOME-ASSOCIATED GTPASE 2"/>
    <property type="match status" value="1"/>
</dbReference>
<dbReference type="Pfam" id="PF01018">
    <property type="entry name" value="GTP1_OBG"/>
    <property type="match status" value="1"/>
</dbReference>
<dbReference type="Pfam" id="PF01926">
    <property type="entry name" value="MMR_HSR1"/>
    <property type="match status" value="1"/>
</dbReference>
<dbReference type="PIRSF" id="PIRSF002401">
    <property type="entry name" value="GTP_bd_Obg/CgtA"/>
    <property type="match status" value="1"/>
</dbReference>
<dbReference type="PRINTS" id="PR00326">
    <property type="entry name" value="GTP1OBG"/>
</dbReference>
<dbReference type="SUPFAM" id="SSF82051">
    <property type="entry name" value="Obg GTP-binding protein N-terminal domain"/>
    <property type="match status" value="1"/>
</dbReference>
<dbReference type="SUPFAM" id="SSF52540">
    <property type="entry name" value="P-loop containing nucleoside triphosphate hydrolases"/>
    <property type="match status" value="1"/>
</dbReference>
<dbReference type="PROSITE" id="PS51710">
    <property type="entry name" value="G_OBG"/>
    <property type="match status" value="1"/>
</dbReference>
<dbReference type="PROSITE" id="PS00905">
    <property type="entry name" value="GTP1_OBG"/>
    <property type="match status" value="1"/>
</dbReference>
<dbReference type="PROSITE" id="PS51883">
    <property type="entry name" value="OBG"/>
    <property type="match status" value="1"/>
</dbReference>
<protein>
    <recommendedName>
        <fullName evidence="1">GTPase Obg</fullName>
        <ecNumber evidence="1">3.6.5.-</ecNumber>
    </recommendedName>
    <alternativeName>
        <fullName evidence="1">GTP-binding protein Obg</fullName>
    </alternativeName>
</protein>
<feature type="chain" id="PRO_0000386179" description="GTPase Obg">
    <location>
        <begin position="1"/>
        <end position="343"/>
    </location>
</feature>
<feature type="domain" description="Obg" evidence="2">
    <location>
        <begin position="1"/>
        <end position="159"/>
    </location>
</feature>
<feature type="domain" description="OBG-type G" evidence="1">
    <location>
        <begin position="160"/>
        <end position="327"/>
    </location>
</feature>
<feature type="binding site" evidence="1">
    <location>
        <begin position="166"/>
        <end position="173"/>
    </location>
    <ligand>
        <name>GTP</name>
        <dbReference type="ChEBI" id="CHEBI:37565"/>
    </ligand>
</feature>
<feature type="binding site" evidence="1">
    <location>
        <position position="173"/>
    </location>
    <ligand>
        <name>Mg(2+)</name>
        <dbReference type="ChEBI" id="CHEBI:18420"/>
    </ligand>
</feature>
<feature type="binding site" evidence="1">
    <location>
        <begin position="191"/>
        <end position="195"/>
    </location>
    <ligand>
        <name>GTP</name>
        <dbReference type="ChEBI" id="CHEBI:37565"/>
    </ligand>
</feature>
<feature type="binding site" evidence="1">
    <location>
        <position position="193"/>
    </location>
    <ligand>
        <name>Mg(2+)</name>
        <dbReference type="ChEBI" id="CHEBI:18420"/>
    </ligand>
</feature>
<feature type="binding site" evidence="1">
    <location>
        <begin position="212"/>
        <end position="215"/>
    </location>
    <ligand>
        <name>GTP</name>
        <dbReference type="ChEBI" id="CHEBI:37565"/>
    </ligand>
</feature>
<feature type="binding site" evidence="1">
    <location>
        <begin position="279"/>
        <end position="282"/>
    </location>
    <ligand>
        <name>GTP</name>
        <dbReference type="ChEBI" id="CHEBI:37565"/>
    </ligand>
</feature>
<feature type="binding site" evidence="1">
    <location>
        <begin position="308"/>
        <end position="310"/>
    </location>
    <ligand>
        <name>GTP</name>
        <dbReference type="ChEBI" id="CHEBI:37565"/>
    </ligand>
</feature>
<evidence type="ECO:0000255" key="1">
    <source>
        <dbReference type="HAMAP-Rule" id="MF_01454"/>
    </source>
</evidence>
<evidence type="ECO:0000255" key="2">
    <source>
        <dbReference type="PROSITE-ProRule" id="PRU01231"/>
    </source>
</evidence>